<protein>
    <recommendedName>
        <fullName>Uncharacterized 5.8 kDa protein</fullName>
    </recommendedName>
    <alternativeName>
        <fullName>ORF48</fullName>
    </alternativeName>
</protein>
<dbReference type="EMBL" id="U02466">
    <property type="protein sequence ID" value="AAB60271.1"/>
    <property type="molecule type" value="Unassigned_DNA"/>
</dbReference>
<dbReference type="PIR" id="S42399">
    <property type="entry name" value="S42399"/>
</dbReference>
<dbReference type="SMR" id="Q37928"/>
<dbReference type="InterPro" id="IPR022626">
    <property type="entry name" value="DUF2740"/>
</dbReference>
<dbReference type="Pfam" id="PF10872">
    <property type="entry name" value="DUF2740"/>
    <property type="match status" value="1"/>
</dbReference>
<organismHost>
    <name type="scientific">Escherichia coli</name>
    <dbReference type="NCBI Taxonomy" id="562"/>
</organismHost>
<organism>
    <name type="scientific">Escherichia phage HK022</name>
    <name type="common">Bacteriophage HK022</name>
    <dbReference type="NCBI Taxonomy" id="10742"/>
    <lineage>
        <taxon>Viruses</taxon>
        <taxon>Duplodnaviria</taxon>
        <taxon>Heunggongvirae</taxon>
        <taxon>Uroviricota</taxon>
        <taxon>Caudoviricetes</taxon>
        <taxon>Hendrixvirinae</taxon>
        <taxon>Shamshuipovirus</taxon>
    </lineage>
</organism>
<reference key="1">
    <citation type="journal article" date="1994" name="Nucleic Acids Res.">
        <title>A segment of the phage HK022 chromosome is a mosaic of other lambdoid chromosomes.</title>
        <authorList>
            <person name="Oberto J."/>
            <person name="Bohmer Sloan S."/>
            <person name="Weisberg R.A."/>
        </authorList>
    </citation>
    <scope>NUCLEOTIDE SEQUENCE</scope>
</reference>
<sequence>MTKQLSPYQDKIHKHILRDRFLSSFKQPGRFRAELEKVKLMQKEKGHE</sequence>
<accession>Q37928</accession>
<name>YO48_BPHK0</name>
<proteinExistence type="predicted"/>
<feature type="chain" id="PRO_0000077776" description="Uncharacterized 5.8 kDa protein">
    <location>
        <begin position="1"/>
        <end position="48"/>
    </location>
</feature>